<dbReference type="EC" id="2.7.6.1" evidence="1"/>
<dbReference type="EMBL" id="CP000678">
    <property type="protein sequence ID" value="ABQ87782.1"/>
    <property type="molecule type" value="Genomic_DNA"/>
</dbReference>
<dbReference type="RefSeq" id="WP_004033541.1">
    <property type="nucleotide sequence ID" value="NZ_CP117965.1"/>
</dbReference>
<dbReference type="SMR" id="A5UNK4"/>
<dbReference type="STRING" id="420247.Msm_1577"/>
<dbReference type="EnsemblBacteria" id="ABQ87782">
    <property type="protein sequence ID" value="ABQ87782"/>
    <property type="gene ID" value="Msm_1577"/>
</dbReference>
<dbReference type="KEGG" id="msi:Msm_1577"/>
<dbReference type="PATRIC" id="fig|420247.28.peg.1567"/>
<dbReference type="eggNOG" id="arCOG00067">
    <property type="taxonomic scope" value="Archaea"/>
</dbReference>
<dbReference type="HOGENOM" id="CLU_033546_2_2_2"/>
<dbReference type="UniPathway" id="UPA00087">
    <property type="reaction ID" value="UER00172"/>
</dbReference>
<dbReference type="Proteomes" id="UP000001992">
    <property type="component" value="Chromosome"/>
</dbReference>
<dbReference type="GO" id="GO:0005737">
    <property type="term" value="C:cytoplasm"/>
    <property type="evidence" value="ECO:0007669"/>
    <property type="project" value="UniProtKB-SubCell"/>
</dbReference>
<dbReference type="GO" id="GO:0002189">
    <property type="term" value="C:ribose phosphate diphosphokinase complex"/>
    <property type="evidence" value="ECO:0007669"/>
    <property type="project" value="TreeGrafter"/>
</dbReference>
<dbReference type="GO" id="GO:0005524">
    <property type="term" value="F:ATP binding"/>
    <property type="evidence" value="ECO:0007669"/>
    <property type="project" value="UniProtKB-KW"/>
</dbReference>
<dbReference type="GO" id="GO:0016301">
    <property type="term" value="F:kinase activity"/>
    <property type="evidence" value="ECO:0007669"/>
    <property type="project" value="UniProtKB-KW"/>
</dbReference>
<dbReference type="GO" id="GO:0000287">
    <property type="term" value="F:magnesium ion binding"/>
    <property type="evidence" value="ECO:0007669"/>
    <property type="project" value="UniProtKB-UniRule"/>
</dbReference>
<dbReference type="GO" id="GO:0004749">
    <property type="term" value="F:ribose phosphate diphosphokinase activity"/>
    <property type="evidence" value="ECO:0007669"/>
    <property type="project" value="UniProtKB-UniRule"/>
</dbReference>
<dbReference type="GO" id="GO:0006015">
    <property type="term" value="P:5-phosphoribose 1-diphosphate biosynthetic process"/>
    <property type="evidence" value="ECO:0007669"/>
    <property type="project" value="UniProtKB-UniRule"/>
</dbReference>
<dbReference type="GO" id="GO:0006164">
    <property type="term" value="P:purine nucleotide biosynthetic process"/>
    <property type="evidence" value="ECO:0007669"/>
    <property type="project" value="TreeGrafter"/>
</dbReference>
<dbReference type="CDD" id="cd06223">
    <property type="entry name" value="PRTases_typeI"/>
    <property type="match status" value="1"/>
</dbReference>
<dbReference type="FunFam" id="3.40.50.2020:FF:000007">
    <property type="entry name" value="Ribose-phosphate pyrophosphokinase"/>
    <property type="match status" value="1"/>
</dbReference>
<dbReference type="Gene3D" id="3.40.50.2020">
    <property type="match status" value="2"/>
</dbReference>
<dbReference type="HAMAP" id="MF_00583_A">
    <property type="entry name" value="RibP_PPkinase_A"/>
    <property type="match status" value="1"/>
</dbReference>
<dbReference type="InterPro" id="IPR029099">
    <property type="entry name" value="Pribosyltran_N"/>
</dbReference>
<dbReference type="InterPro" id="IPR000836">
    <property type="entry name" value="PRibTrfase_dom"/>
</dbReference>
<dbReference type="InterPro" id="IPR029057">
    <property type="entry name" value="PRTase-like"/>
</dbReference>
<dbReference type="InterPro" id="IPR005946">
    <property type="entry name" value="Rib-P_diPkinase"/>
</dbReference>
<dbReference type="InterPro" id="IPR037514">
    <property type="entry name" value="Rib-P_diPkinase_arc"/>
</dbReference>
<dbReference type="NCBIfam" id="NF002095">
    <property type="entry name" value="PRK00934.1"/>
    <property type="match status" value="1"/>
</dbReference>
<dbReference type="NCBIfam" id="TIGR01251">
    <property type="entry name" value="ribP_PPkin"/>
    <property type="match status" value="1"/>
</dbReference>
<dbReference type="PANTHER" id="PTHR10210">
    <property type="entry name" value="RIBOSE-PHOSPHATE DIPHOSPHOKINASE FAMILY MEMBER"/>
    <property type="match status" value="1"/>
</dbReference>
<dbReference type="PANTHER" id="PTHR10210:SF32">
    <property type="entry name" value="RIBOSE-PHOSPHATE PYROPHOSPHOKINASE 2"/>
    <property type="match status" value="1"/>
</dbReference>
<dbReference type="Pfam" id="PF00156">
    <property type="entry name" value="Pribosyltran"/>
    <property type="match status" value="1"/>
</dbReference>
<dbReference type="Pfam" id="PF13793">
    <property type="entry name" value="Pribosyltran_N"/>
    <property type="match status" value="1"/>
</dbReference>
<dbReference type="SMART" id="SM01400">
    <property type="entry name" value="Pribosyltran_N"/>
    <property type="match status" value="1"/>
</dbReference>
<dbReference type="SUPFAM" id="SSF53271">
    <property type="entry name" value="PRTase-like"/>
    <property type="match status" value="2"/>
</dbReference>
<keyword id="KW-0067">ATP-binding</keyword>
<keyword id="KW-0963">Cytoplasm</keyword>
<keyword id="KW-0418">Kinase</keyword>
<keyword id="KW-0460">Magnesium</keyword>
<keyword id="KW-0479">Metal-binding</keyword>
<keyword id="KW-0545">Nucleotide biosynthesis</keyword>
<keyword id="KW-0547">Nucleotide-binding</keyword>
<keyword id="KW-0808">Transferase</keyword>
<sequence>MIIGGSASQDLAAHVAEELNDDLCYVETKKFPDGERYLRVDGEIDDEVTVIQSTGYPQDENLMELLFLISNLKDLGAKKVRVVVPYMGYARQEKRFHDGEAVSAKIVANLIQSAGADEFITFNIHEKCVLDFFDIPTTNISAMGAIAEYIDEKIDEKPLIVAPDKGAYPFAQEIAEILDCECTYLSKVRLGPDKVETRIVDVEGSSDETVNVDSVKGKKAFIIDDIIATGGTIVNAVKILKEYGAKSVDVCCVHPILVNGATMRIYAAGANSLISTNSLSADSSRVSLAKSIANVLRD</sequence>
<protein>
    <recommendedName>
        <fullName evidence="1">Ribose-phosphate pyrophosphokinase</fullName>
        <shortName evidence="1">RPPK</shortName>
        <ecNumber evidence="1">2.7.6.1</ecNumber>
    </recommendedName>
    <alternativeName>
        <fullName evidence="1">5-phospho-D-ribosyl alpha-1-diphosphate synthase</fullName>
    </alternativeName>
    <alternativeName>
        <fullName evidence="1">Phosphoribosyl diphosphate synthase</fullName>
    </alternativeName>
    <alternativeName>
        <fullName evidence="1">Phosphoribosyl pyrophosphate synthase</fullName>
        <shortName evidence="1">P-Rib-PP synthase</shortName>
        <shortName evidence="1">PRPP synthase</shortName>
        <shortName evidence="1">PRPPase</shortName>
    </alternativeName>
</protein>
<evidence type="ECO:0000255" key="1">
    <source>
        <dbReference type="HAMAP-Rule" id="MF_00583"/>
    </source>
</evidence>
<comment type="function">
    <text evidence="1">Involved in the biosynthesis of the central metabolite phospho-alpha-D-ribosyl-1-pyrophosphate (PRPP) via the transfer of pyrophosphoryl group from ATP to 1-hydroxyl of ribose-5-phosphate (Rib-5-P).</text>
</comment>
<comment type="catalytic activity">
    <reaction evidence="1">
        <text>D-ribose 5-phosphate + ATP = 5-phospho-alpha-D-ribose 1-diphosphate + AMP + H(+)</text>
        <dbReference type="Rhea" id="RHEA:15609"/>
        <dbReference type="ChEBI" id="CHEBI:15378"/>
        <dbReference type="ChEBI" id="CHEBI:30616"/>
        <dbReference type="ChEBI" id="CHEBI:58017"/>
        <dbReference type="ChEBI" id="CHEBI:78346"/>
        <dbReference type="ChEBI" id="CHEBI:456215"/>
        <dbReference type="EC" id="2.7.6.1"/>
    </reaction>
</comment>
<comment type="cofactor">
    <cofactor evidence="1">
        <name>Mg(2+)</name>
        <dbReference type="ChEBI" id="CHEBI:18420"/>
    </cofactor>
    <text evidence="1">Binds 2 Mg(2+) ions per subunit.</text>
</comment>
<comment type="pathway">
    <text evidence="1">Metabolic intermediate biosynthesis; 5-phospho-alpha-D-ribose 1-diphosphate biosynthesis; 5-phospho-alpha-D-ribose 1-diphosphate from D-ribose 5-phosphate (route I): step 1/1.</text>
</comment>
<comment type="subcellular location">
    <subcellularLocation>
        <location evidence="1">Cytoplasm</location>
    </subcellularLocation>
</comment>
<comment type="similarity">
    <text evidence="1">Belongs to the ribose-phosphate pyrophosphokinase family. Class III (archaeal) subfamily.</text>
</comment>
<gene>
    <name evidence="1" type="primary">prs</name>
    <name type="ordered locus">Msm_1577</name>
</gene>
<accession>A5UNK4</accession>
<organism>
    <name type="scientific">Methanobrevibacter smithii (strain ATCC 35061 / DSM 861 / OCM 144 / PS)</name>
    <dbReference type="NCBI Taxonomy" id="420247"/>
    <lineage>
        <taxon>Archaea</taxon>
        <taxon>Methanobacteriati</taxon>
        <taxon>Methanobacteriota</taxon>
        <taxon>Methanomada group</taxon>
        <taxon>Methanobacteria</taxon>
        <taxon>Methanobacteriales</taxon>
        <taxon>Methanobacteriaceae</taxon>
        <taxon>Methanobrevibacter</taxon>
    </lineage>
</organism>
<feature type="chain" id="PRO_1000061200" description="Ribose-phosphate pyrophosphokinase">
    <location>
        <begin position="1"/>
        <end position="298"/>
    </location>
</feature>
<feature type="active site" evidence="1">
    <location>
        <position position="187"/>
    </location>
</feature>
<feature type="binding site" evidence="1">
    <location>
        <begin position="33"/>
        <end position="35"/>
    </location>
    <ligand>
        <name>ATP</name>
        <dbReference type="ChEBI" id="CHEBI:30616"/>
    </ligand>
</feature>
<feature type="binding site" evidence="1">
    <location>
        <begin position="91"/>
        <end position="92"/>
    </location>
    <ligand>
        <name>ATP</name>
        <dbReference type="ChEBI" id="CHEBI:30616"/>
    </ligand>
</feature>
<feature type="binding site" evidence="1">
    <location>
        <position position="125"/>
    </location>
    <ligand>
        <name>Mg(2+)</name>
        <dbReference type="ChEBI" id="CHEBI:18420"/>
        <label>1</label>
    </ligand>
</feature>
<feature type="binding site" evidence="1">
    <location>
        <position position="164"/>
    </location>
    <ligand>
        <name>Mg(2+)</name>
        <dbReference type="ChEBI" id="CHEBI:18420"/>
        <label>2</label>
    </ligand>
</feature>
<feature type="binding site" evidence="1">
    <location>
        <position position="189"/>
    </location>
    <ligand>
        <name>D-ribose 5-phosphate</name>
        <dbReference type="ChEBI" id="CHEBI:78346"/>
    </ligand>
</feature>
<feature type="binding site" evidence="1">
    <location>
        <position position="224"/>
    </location>
    <ligand>
        <name>D-ribose 5-phosphate</name>
        <dbReference type="ChEBI" id="CHEBI:78346"/>
    </ligand>
</feature>
<name>KPRS_METS3</name>
<proteinExistence type="inferred from homology"/>
<reference key="1">
    <citation type="journal article" date="2007" name="Proc. Natl. Acad. Sci. U.S.A.">
        <title>Genomic and metabolic adaptations of Methanobrevibacter smithii to the human gut.</title>
        <authorList>
            <person name="Samuel B.S."/>
            <person name="Hansen E.E."/>
            <person name="Manchester J.K."/>
            <person name="Coutinho P.M."/>
            <person name="Henrissat B."/>
            <person name="Fulton R."/>
            <person name="Latreille P."/>
            <person name="Kim K."/>
            <person name="Wilson R.K."/>
            <person name="Gordon J.I."/>
        </authorList>
    </citation>
    <scope>NUCLEOTIDE SEQUENCE [LARGE SCALE GENOMIC DNA]</scope>
    <source>
        <strain>ATCC 35061 / DSM 861 / OCM 144 / PS</strain>
    </source>
</reference>